<comment type="function">
    <text evidence="2">Involved in nuclear export of spliced and unspliced mRNA. Component of the TREX complex which is thought to couple mRNA transcription, processing and nuclear export, and specifically associates with spliced mRNA and not with unspliced pre-mRNA. The TREX complex is recruited to spliced mRNAs by a transcription-independent mechanism, binds to mRNA upstream of the exon-junction complex (EJC) and is recruited in a splicing- and cap-dependent manner to a region near the 5' end of the mRNA where it functions in mRNA export to the cytoplasm via the TAP/NXF1 pathway. The THOC1-THOC2-THOC3 core complex alone is sufficient to promote ATPase activity of DDX39B; in the complex THOC2 is the only component that directly interacts with DDX39B. Associates with SARNP/CIP29, which facilitates RNA binding of DDX39B and likely plays a role in mRNA export. May undergo several rounds of ATP hydrolysis during assembly of TREX to drive subsequent loading of components such as ALYREF/THOC4 and CHTOP onto mRNA. Also associates with pre-mRNA independent of ALYREF/THOC4. Involved in the nuclear export of intronless mRNA; the ATP-bound form is proposed to recruit export adapter ALYREF/THOC4 to intronless mRNA; its ATPase activity is cooperatively stimulated by RNA and ALYREF/THOC4 and ATP hydrolysis is thought to trigger the dissociation from RNA to allow the association of ALYREF/THOC4 and the NXF1-NXT1 heterodimer. Involved in transcription elongation and genome stability.</text>
</comment>
<comment type="function">
    <text evidence="2">Splice factor that is required for the first ATP-dependent step in spliceosome assembly and for the interaction of U2 snRNP with the branchpoint. Has both RNA-stimulated ATP binding/hydrolysis activity and ATP-dependent RNA unwinding activity. Even with the stimulation of RNA, the ATPase activity is weak. Can only hydrolyze ATP but not other NTPs. The RNA stimulation of ATPase activity does not have a strong preference for the sequence and length of the RNA. However, ssRNA stimulates the ATPase activity much more strongly than dsRNA. Can unwind 5' or 3' overhangs or blunt end RNA duplexes in vitro. The ATPase and helicase activities are not influenced by U2AF2; the effect of ALYREF/THOC4 is reported conflictingly.</text>
</comment>
<comment type="catalytic activity">
    <reaction evidence="2">
        <text>ATP + H2O = ADP + phosphate + H(+)</text>
        <dbReference type="Rhea" id="RHEA:13065"/>
        <dbReference type="ChEBI" id="CHEBI:15377"/>
        <dbReference type="ChEBI" id="CHEBI:15378"/>
        <dbReference type="ChEBI" id="CHEBI:30616"/>
        <dbReference type="ChEBI" id="CHEBI:43474"/>
        <dbReference type="ChEBI" id="CHEBI:456216"/>
        <dbReference type="EC" id="3.6.4.13"/>
    </reaction>
</comment>
<comment type="subunit">
    <text evidence="2">Homodimer, and heterodimer with DDX39A. DDX39B interacts with the THO subcomplex to form the THO-DDX39B complex which multimerizes into a 28-subunit tetrameric assembly. Component of the transcription/export (TREX) complex at least composed of ALYREF/THOC4, DDX39B, SARNP/CIP29, CHTOP and the THO subcomplex; in the complex interacts with THOC2. THOC1-THOC2-THOC3-DDX39B subcomplex is sufficient for the interaction with export factor NXF1-NXT1. TREX seems to have a dynamic structure involving ATP-dependent remodeling. Within the TREX complex bridges ALYREF/THOC4 and the THO subcomplex, and, in a ATP-dependent manner, ALYREF/THOC4 and SARNP/CIP29. Component of the spliceosome. Interacts directly with U2AF2. Interacts with RBM8A, RNPS1 and SRRM1, FYTTD1/UIF, THOC1, MX1 and POLDIP3. Interacts with LUZP4. Interacts with SARNP/CIP29 (via the C-terminal domain); the interaction is direct and facilitates RNA binding of DDX39B.</text>
</comment>
<comment type="subcellular location">
    <subcellularLocation>
        <location evidence="1">Nucleus</location>
    </subcellularLocation>
    <subcellularLocation>
        <location evidence="1">Nucleus speckle</location>
    </subcellularLocation>
    <subcellularLocation>
        <location evidence="1">Cytoplasm</location>
    </subcellularLocation>
    <text evidence="1">Can translocate to the cytoplasm in the presence of MX1.</text>
</comment>
<comment type="domain">
    <text evidence="1">The helicase C-terminal domain mediates interaction with ALYREF/THOC4.</text>
</comment>
<comment type="similarity">
    <text evidence="6">Belongs to the DEAD box helicase family. DECD subfamily.</text>
</comment>
<organism>
    <name type="scientific">Canis lupus familiaris</name>
    <name type="common">Dog</name>
    <name type="synonym">Canis familiaris</name>
    <dbReference type="NCBI Taxonomy" id="9615"/>
    <lineage>
        <taxon>Eukaryota</taxon>
        <taxon>Metazoa</taxon>
        <taxon>Chordata</taxon>
        <taxon>Craniata</taxon>
        <taxon>Vertebrata</taxon>
        <taxon>Euteleostomi</taxon>
        <taxon>Mammalia</taxon>
        <taxon>Eutheria</taxon>
        <taxon>Laurasiatheria</taxon>
        <taxon>Carnivora</taxon>
        <taxon>Caniformia</taxon>
        <taxon>Canidae</taxon>
        <taxon>Canis</taxon>
    </lineage>
</organism>
<name>DX39B_CANLF</name>
<reference key="1">
    <citation type="submission" date="2003-09" db="EMBL/GenBank/DDBJ databases">
        <title>Gemomic map of a portion of the canine MHC class I histocompatibility complex.</title>
        <authorList>
            <person name="Wagner J.L."/>
            <person name="Palti Y."/>
            <person name="DiDario D.D."/>
        </authorList>
    </citation>
    <scope>NUCLEOTIDE SEQUENCE [GENOMIC DNA]</scope>
</reference>
<proteinExistence type="inferred from homology"/>
<evidence type="ECO:0000250" key="1"/>
<evidence type="ECO:0000250" key="2">
    <source>
        <dbReference type="UniProtKB" id="Q13838"/>
    </source>
</evidence>
<evidence type="ECO:0000255" key="3">
    <source>
        <dbReference type="PROSITE-ProRule" id="PRU00541"/>
    </source>
</evidence>
<evidence type="ECO:0000255" key="4">
    <source>
        <dbReference type="PROSITE-ProRule" id="PRU00542"/>
    </source>
</evidence>
<evidence type="ECO:0000256" key="5">
    <source>
        <dbReference type="SAM" id="MobiDB-lite"/>
    </source>
</evidence>
<evidence type="ECO:0000305" key="6"/>
<accession>Q5WR10</accession>
<feature type="initiator methionine" description="Removed" evidence="2">
    <location>
        <position position="1"/>
    </location>
</feature>
<feature type="chain" id="PRO_0000055070" description="Spliceosome RNA helicase DDX39B">
    <location>
        <begin position="2"/>
        <end position="428"/>
    </location>
</feature>
<feature type="domain" description="Helicase ATP-binding" evidence="3">
    <location>
        <begin position="76"/>
        <end position="249"/>
    </location>
</feature>
<feature type="domain" description="Helicase C-terminal" evidence="4">
    <location>
        <begin position="261"/>
        <end position="422"/>
    </location>
</feature>
<feature type="region of interest" description="Disordered" evidence="5">
    <location>
        <begin position="1"/>
        <end position="32"/>
    </location>
</feature>
<feature type="short sequence motif" description="Q motif">
    <location>
        <begin position="45"/>
        <end position="73"/>
    </location>
</feature>
<feature type="short sequence motif" description="DECD box">
    <location>
        <begin position="196"/>
        <end position="199"/>
    </location>
</feature>
<feature type="compositionally biased region" description="Acidic residues" evidence="5">
    <location>
        <begin position="1"/>
        <end position="19"/>
    </location>
</feature>
<feature type="binding site" evidence="3">
    <location>
        <begin position="89"/>
        <end position="96"/>
    </location>
    <ligand>
        <name>ATP</name>
        <dbReference type="ChEBI" id="CHEBI:30616"/>
    </ligand>
</feature>
<feature type="modified residue" description="N-acetylalanine" evidence="2">
    <location>
        <position position="2"/>
    </location>
</feature>
<feature type="modified residue" description="N6-acetyllysine; alternate" evidence="2">
    <location>
        <position position="36"/>
    </location>
</feature>
<feature type="modified residue" description="Phosphoserine" evidence="2">
    <location>
        <position position="38"/>
    </location>
</feature>
<feature type="modified residue" description="Phosphoserine" evidence="2">
    <location>
        <position position="41"/>
    </location>
</feature>
<feature type="modified residue" description="Phosphothreonine" evidence="2">
    <location>
        <position position="172"/>
    </location>
</feature>
<feature type="cross-link" description="Glycyl lysine isopeptide (Lys-Gly) (interchain with G-Cter in SUMO2); alternate" evidence="2">
    <location>
        <position position="36"/>
    </location>
</feature>
<protein>
    <recommendedName>
        <fullName>Spliceosome RNA helicase DDX39B</fullName>
        <ecNumber>3.6.4.13</ecNumber>
    </recommendedName>
    <alternativeName>
        <fullName>56 kDa U2AF65-associated protein</fullName>
    </alternativeName>
    <alternativeName>
        <fullName>DEAD box protein UAP56</fullName>
    </alternativeName>
</protein>
<dbReference type="EC" id="3.6.4.13"/>
<dbReference type="EMBL" id="AY423389">
    <property type="protein sequence ID" value="AAR27886.1"/>
    <property type="molecule type" value="Genomic_DNA"/>
</dbReference>
<dbReference type="RefSeq" id="NP_001014399.1">
    <property type="nucleotide sequence ID" value="NM_001014377.1"/>
</dbReference>
<dbReference type="RefSeq" id="XP_013973506.1">
    <property type="nucleotide sequence ID" value="XM_014118031.1"/>
</dbReference>
<dbReference type="RefSeq" id="XP_013973507.1">
    <property type="nucleotide sequence ID" value="XM_014118032.1"/>
</dbReference>
<dbReference type="RefSeq" id="XP_038538640.1">
    <property type="nucleotide sequence ID" value="XM_038682712.1"/>
</dbReference>
<dbReference type="RefSeq" id="XP_038538641.1">
    <property type="nucleotide sequence ID" value="XM_038682713.1"/>
</dbReference>
<dbReference type="SMR" id="Q5WR10"/>
<dbReference type="FunCoup" id="Q5WR10">
    <property type="interactions" value="3176"/>
</dbReference>
<dbReference type="STRING" id="9615.ENSCAFP00000031897"/>
<dbReference type="PaxDb" id="9612-ENSCAFP00000031897"/>
<dbReference type="Ensembl" id="ENSCAFT00000095917.1">
    <property type="protein sequence ID" value="ENSCAFP00000072739.1"/>
    <property type="gene ID" value="ENSCAFG00000000509.6"/>
</dbReference>
<dbReference type="Ensembl" id="ENSCAFT00030008005.1">
    <property type="protein sequence ID" value="ENSCAFP00030007032.1"/>
    <property type="gene ID" value="ENSCAFG00030004350.1"/>
</dbReference>
<dbReference type="Ensembl" id="ENSCAFT00040017081.1">
    <property type="protein sequence ID" value="ENSCAFP00040014801.1"/>
    <property type="gene ID" value="ENSCAFG00040009227.1"/>
</dbReference>
<dbReference type="Ensembl" id="ENSCAFT00845018143.1">
    <property type="protein sequence ID" value="ENSCAFP00845014141.1"/>
    <property type="gene ID" value="ENSCAFG00845010305.1"/>
</dbReference>
<dbReference type="GeneID" id="474839"/>
<dbReference type="KEGG" id="cfa:474839"/>
<dbReference type="CTD" id="7919"/>
<dbReference type="VEuPathDB" id="HostDB:ENSCAFG00845010305"/>
<dbReference type="VGNC" id="VGNC:39855">
    <property type="gene designation" value="DDX39B"/>
</dbReference>
<dbReference type="eggNOG" id="KOG0329">
    <property type="taxonomic scope" value="Eukaryota"/>
</dbReference>
<dbReference type="GeneTree" id="ENSGT00940000160110"/>
<dbReference type="HOGENOM" id="CLU_003041_1_0_1"/>
<dbReference type="InParanoid" id="Q5WR10"/>
<dbReference type="OMA" id="YAHVEPK"/>
<dbReference type="OrthoDB" id="196131at2759"/>
<dbReference type="TreeFam" id="TF300442"/>
<dbReference type="Reactome" id="R-CFA-72163">
    <property type="pathway name" value="mRNA Splicing - Major Pathway"/>
</dbReference>
<dbReference type="Reactome" id="R-CFA-72187">
    <property type="pathway name" value="mRNA 3'-end processing"/>
</dbReference>
<dbReference type="Reactome" id="R-CFA-73856">
    <property type="pathway name" value="RNA Polymerase II Transcription Termination"/>
</dbReference>
<dbReference type="Reactome" id="R-CFA-9013418">
    <property type="pathway name" value="RHOBTB2 GTPase cycle"/>
</dbReference>
<dbReference type="Proteomes" id="UP000002254">
    <property type="component" value="Chromosome 12"/>
</dbReference>
<dbReference type="Proteomes" id="UP000694429">
    <property type="component" value="Chromosome 12"/>
</dbReference>
<dbReference type="Proteomes" id="UP000694542">
    <property type="component" value="Chromosome 12"/>
</dbReference>
<dbReference type="Proteomes" id="UP000805418">
    <property type="component" value="Chromosome 12"/>
</dbReference>
<dbReference type="GO" id="GO:0005737">
    <property type="term" value="C:cytoplasm"/>
    <property type="evidence" value="ECO:0007669"/>
    <property type="project" value="UniProtKB-SubCell"/>
</dbReference>
<dbReference type="GO" id="GO:0016607">
    <property type="term" value="C:nuclear speck"/>
    <property type="evidence" value="ECO:0007669"/>
    <property type="project" value="UniProtKB-SubCell"/>
</dbReference>
<dbReference type="GO" id="GO:0005681">
    <property type="term" value="C:spliceosomal complex"/>
    <property type="evidence" value="ECO:0007669"/>
    <property type="project" value="UniProtKB-KW"/>
</dbReference>
<dbReference type="GO" id="GO:0000346">
    <property type="term" value="C:transcription export complex"/>
    <property type="evidence" value="ECO:0007669"/>
    <property type="project" value="Ensembl"/>
</dbReference>
<dbReference type="GO" id="GO:0005687">
    <property type="term" value="C:U4 snRNP"/>
    <property type="evidence" value="ECO:0007669"/>
    <property type="project" value="Ensembl"/>
</dbReference>
<dbReference type="GO" id="GO:0005688">
    <property type="term" value="C:U6 snRNP"/>
    <property type="evidence" value="ECO:0007669"/>
    <property type="project" value="Ensembl"/>
</dbReference>
<dbReference type="GO" id="GO:0005524">
    <property type="term" value="F:ATP binding"/>
    <property type="evidence" value="ECO:0007669"/>
    <property type="project" value="UniProtKB-KW"/>
</dbReference>
<dbReference type="GO" id="GO:0016887">
    <property type="term" value="F:ATP hydrolysis activity"/>
    <property type="evidence" value="ECO:0007669"/>
    <property type="project" value="RHEA"/>
</dbReference>
<dbReference type="GO" id="GO:0043008">
    <property type="term" value="F:ATP-dependent protein binding"/>
    <property type="evidence" value="ECO:0007669"/>
    <property type="project" value="Ensembl"/>
</dbReference>
<dbReference type="GO" id="GO:0042802">
    <property type="term" value="F:identical protein binding"/>
    <property type="evidence" value="ECO:0007669"/>
    <property type="project" value="Ensembl"/>
</dbReference>
<dbReference type="GO" id="GO:0003729">
    <property type="term" value="F:mRNA binding"/>
    <property type="evidence" value="ECO:0000318"/>
    <property type="project" value="GO_Central"/>
</dbReference>
<dbReference type="GO" id="GO:0003724">
    <property type="term" value="F:RNA helicase activity"/>
    <property type="evidence" value="ECO:0000318"/>
    <property type="project" value="GO_Central"/>
</dbReference>
<dbReference type="GO" id="GO:0030621">
    <property type="term" value="F:U4 snRNA binding"/>
    <property type="evidence" value="ECO:0007669"/>
    <property type="project" value="Ensembl"/>
</dbReference>
<dbReference type="GO" id="GO:0017070">
    <property type="term" value="F:U6 snRNA binding"/>
    <property type="evidence" value="ECO:0007669"/>
    <property type="project" value="Ensembl"/>
</dbReference>
<dbReference type="GO" id="GO:0006406">
    <property type="term" value="P:mRNA export from nucleus"/>
    <property type="evidence" value="ECO:0000318"/>
    <property type="project" value="GO_Central"/>
</dbReference>
<dbReference type="GO" id="GO:0000398">
    <property type="term" value="P:mRNA splicing, via spliceosome"/>
    <property type="evidence" value="ECO:0000318"/>
    <property type="project" value="GO_Central"/>
</dbReference>
<dbReference type="GO" id="GO:0000245">
    <property type="term" value="P:spliceosomal complex assembly"/>
    <property type="evidence" value="ECO:0007669"/>
    <property type="project" value="Ensembl"/>
</dbReference>
<dbReference type="CDD" id="cd17950">
    <property type="entry name" value="DEADc_DDX39"/>
    <property type="match status" value="1"/>
</dbReference>
<dbReference type="CDD" id="cd18787">
    <property type="entry name" value="SF2_C_DEAD"/>
    <property type="match status" value="1"/>
</dbReference>
<dbReference type="FunFam" id="3.40.50.300:FF:000111">
    <property type="entry name" value="DEAD-box ATP-dependent RNA helicase"/>
    <property type="match status" value="1"/>
</dbReference>
<dbReference type="FunFam" id="3.40.50.300:FF:000168">
    <property type="entry name" value="DEAD-box ATP-dependent RNA helicase 56-like"/>
    <property type="match status" value="1"/>
</dbReference>
<dbReference type="Gene3D" id="3.40.50.300">
    <property type="entry name" value="P-loop containing nucleotide triphosphate hydrolases"/>
    <property type="match status" value="2"/>
</dbReference>
<dbReference type="InterPro" id="IPR011545">
    <property type="entry name" value="DEAD/DEAH_box_helicase_dom"/>
</dbReference>
<dbReference type="InterPro" id="IPR014001">
    <property type="entry name" value="Helicase_ATP-bd"/>
</dbReference>
<dbReference type="InterPro" id="IPR001650">
    <property type="entry name" value="Helicase_C-like"/>
</dbReference>
<dbReference type="InterPro" id="IPR027417">
    <property type="entry name" value="P-loop_NTPase"/>
</dbReference>
<dbReference type="InterPro" id="IPR014014">
    <property type="entry name" value="RNA_helicase_DEAD_Q_motif"/>
</dbReference>
<dbReference type="PANTHER" id="PTHR47958">
    <property type="entry name" value="ATP-DEPENDENT RNA HELICASE DBP3"/>
    <property type="match status" value="1"/>
</dbReference>
<dbReference type="Pfam" id="PF00270">
    <property type="entry name" value="DEAD"/>
    <property type="match status" value="1"/>
</dbReference>
<dbReference type="Pfam" id="PF00271">
    <property type="entry name" value="Helicase_C"/>
    <property type="match status" value="1"/>
</dbReference>
<dbReference type="SMART" id="SM00487">
    <property type="entry name" value="DEXDc"/>
    <property type="match status" value="1"/>
</dbReference>
<dbReference type="SMART" id="SM00490">
    <property type="entry name" value="HELICc"/>
    <property type="match status" value="1"/>
</dbReference>
<dbReference type="SUPFAM" id="SSF52540">
    <property type="entry name" value="P-loop containing nucleoside triphosphate hydrolases"/>
    <property type="match status" value="1"/>
</dbReference>
<dbReference type="PROSITE" id="PS51192">
    <property type="entry name" value="HELICASE_ATP_BIND_1"/>
    <property type="match status" value="1"/>
</dbReference>
<dbReference type="PROSITE" id="PS51194">
    <property type="entry name" value="HELICASE_CTER"/>
    <property type="match status" value="1"/>
</dbReference>
<dbReference type="PROSITE" id="PS51195">
    <property type="entry name" value="Q_MOTIF"/>
    <property type="match status" value="1"/>
</dbReference>
<sequence length="428" mass="49021">MAENDVDNELLDYEEDEVETAAGGDGSEAPAKKDVKGSYVSIHSSGFRDFLLKPELLRAIVDCGFEHPSEVQHECIPQAILGMDVLCQAKSGMGKTAVFVLATLQQLEPVTGQVSVLVMCHTRELAFQISKEYERFSKYMPNVKVAVFFGGLSIKKDEEVLKKNCPHIVVGTPGRILALARNKSLNLKHIKHFILDECDKMLEQLDMRRDVQEIFRMTPHEKQVMMFSATLSKEIRPVCRKFMQDPMEIFVDDETKLTLHGLQQYYVKLKDNEKNRKLFDLLDVLEFNQVVIFVKSVQRCIALAQLLVEQNFPAIAIHRGMPQEERLSRYQQFKDFQRRILVATNLFGRGMDIERVNIAFNYDMPEDSDTYLHRVARAGRFGTKGLAITFVSDENDAKILNDVQDRFEVNISELPDEIDISSYIEQTR</sequence>
<gene>
    <name type="primary">DDX39B</name>
    <name type="synonym">BAT1</name>
    <name type="synonym">UAP56</name>
</gene>
<keyword id="KW-0007">Acetylation</keyword>
<keyword id="KW-0067">ATP-binding</keyword>
<keyword id="KW-0963">Cytoplasm</keyword>
<keyword id="KW-0347">Helicase</keyword>
<keyword id="KW-0378">Hydrolase</keyword>
<keyword id="KW-1017">Isopeptide bond</keyword>
<keyword id="KW-0507">mRNA processing</keyword>
<keyword id="KW-0508">mRNA splicing</keyword>
<keyword id="KW-0509">mRNA transport</keyword>
<keyword id="KW-0547">Nucleotide-binding</keyword>
<keyword id="KW-0539">Nucleus</keyword>
<keyword id="KW-0597">Phosphoprotein</keyword>
<keyword id="KW-1185">Reference proteome</keyword>
<keyword id="KW-0694">RNA-binding</keyword>
<keyword id="KW-0747">Spliceosome</keyword>
<keyword id="KW-0813">Transport</keyword>
<keyword id="KW-0832">Ubl conjugation</keyword>